<dbReference type="EMBL" id="CP000518">
    <property type="protein sequence ID" value="ABL91755.1"/>
    <property type="molecule type" value="Genomic_DNA"/>
</dbReference>
<dbReference type="SMR" id="A1UFZ7"/>
<dbReference type="STRING" id="189918.Mkms_2558"/>
<dbReference type="KEGG" id="mkm:Mkms_2558"/>
<dbReference type="HOGENOM" id="CLU_117653_0_1_11"/>
<dbReference type="OrthoDB" id="123240at2"/>
<dbReference type="GO" id="GO:0005886">
    <property type="term" value="C:plasma membrane"/>
    <property type="evidence" value="ECO:0007669"/>
    <property type="project" value="UniProtKB-SubCell"/>
</dbReference>
<dbReference type="HAMAP" id="MF_00010">
    <property type="entry name" value="UPF0060"/>
    <property type="match status" value="1"/>
</dbReference>
<dbReference type="InterPro" id="IPR003844">
    <property type="entry name" value="UPF0060"/>
</dbReference>
<dbReference type="NCBIfam" id="NF002586">
    <property type="entry name" value="PRK02237.1"/>
    <property type="match status" value="1"/>
</dbReference>
<dbReference type="PANTHER" id="PTHR36116">
    <property type="entry name" value="UPF0060 MEMBRANE PROTEIN YNFA"/>
    <property type="match status" value="1"/>
</dbReference>
<dbReference type="PANTHER" id="PTHR36116:SF1">
    <property type="entry name" value="UPF0060 MEMBRANE PROTEIN YNFA"/>
    <property type="match status" value="1"/>
</dbReference>
<dbReference type="Pfam" id="PF02694">
    <property type="entry name" value="UPF0060"/>
    <property type="match status" value="1"/>
</dbReference>
<dbReference type="SUPFAM" id="SSF103481">
    <property type="entry name" value="Multidrug resistance efflux transporter EmrE"/>
    <property type="match status" value="1"/>
</dbReference>
<feature type="chain" id="PRO_0000282234" description="UPF0060 membrane protein Mkms_2558">
    <location>
        <begin position="1"/>
        <end position="113"/>
    </location>
</feature>
<feature type="transmembrane region" description="Helical" evidence="1">
    <location>
        <begin position="12"/>
        <end position="32"/>
    </location>
</feature>
<feature type="transmembrane region" description="Helical" evidence="1">
    <location>
        <begin position="37"/>
        <end position="57"/>
    </location>
</feature>
<feature type="transmembrane region" description="Helical" evidence="1">
    <location>
        <begin position="66"/>
        <end position="86"/>
    </location>
</feature>
<feature type="transmembrane region" description="Helical" evidence="1">
    <location>
        <begin position="92"/>
        <end position="112"/>
    </location>
</feature>
<name>Y2558_MYCSK</name>
<sequence length="113" mass="11954">MLTGVLVLKSAALFVLAALLEIGGAWLVWQGVREHRGWIWAGAGVIALGAYGFVAAFQPDAHFGRILAAYGGVFVAGSLLWGVVVDGFRPDRWDLTGALVCLVGVGLIMYAPR</sequence>
<evidence type="ECO:0000255" key="1">
    <source>
        <dbReference type="HAMAP-Rule" id="MF_00010"/>
    </source>
</evidence>
<reference key="1">
    <citation type="submission" date="2006-12" db="EMBL/GenBank/DDBJ databases">
        <title>Complete sequence of chromosome of Mycobacterium sp. KMS.</title>
        <authorList>
            <consortium name="US DOE Joint Genome Institute"/>
            <person name="Copeland A."/>
            <person name="Lucas S."/>
            <person name="Lapidus A."/>
            <person name="Barry K."/>
            <person name="Detter J.C."/>
            <person name="Glavina del Rio T."/>
            <person name="Hammon N."/>
            <person name="Israni S."/>
            <person name="Dalin E."/>
            <person name="Tice H."/>
            <person name="Pitluck S."/>
            <person name="Kiss H."/>
            <person name="Brettin T."/>
            <person name="Bruce D."/>
            <person name="Han C."/>
            <person name="Tapia R."/>
            <person name="Gilna P."/>
            <person name="Schmutz J."/>
            <person name="Larimer F."/>
            <person name="Land M."/>
            <person name="Hauser L."/>
            <person name="Kyrpides N."/>
            <person name="Mikhailova N."/>
            <person name="Miller C.D."/>
            <person name="Richardson P."/>
        </authorList>
    </citation>
    <scope>NUCLEOTIDE SEQUENCE [LARGE SCALE GENOMIC DNA]</scope>
    <source>
        <strain>KMS</strain>
    </source>
</reference>
<protein>
    <recommendedName>
        <fullName evidence="1">UPF0060 membrane protein Mkms_2558</fullName>
    </recommendedName>
</protein>
<proteinExistence type="inferred from homology"/>
<gene>
    <name type="ordered locus">Mkms_2558</name>
</gene>
<organism>
    <name type="scientific">Mycobacterium sp. (strain KMS)</name>
    <dbReference type="NCBI Taxonomy" id="189918"/>
    <lineage>
        <taxon>Bacteria</taxon>
        <taxon>Bacillati</taxon>
        <taxon>Actinomycetota</taxon>
        <taxon>Actinomycetes</taxon>
        <taxon>Mycobacteriales</taxon>
        <taxon>Mycobacteriaceae</taxon>
        <taxon>Mycobacterium</taxon>
    </lineage>
</organism>
<accession>A1UFZ7</accession>
<keyword id="KW-1003">Cell membrane</keyword>
<keyword id="KW-0472">Membrane</keyword>
<keyword id="KW-0812">Transmembrane</keyword>
<keyword id="KW-1133">Transmembrane helix</keyword>
<comment type="subcellular location">
    <subcellularLocation>
        <location evidence="1">Cell membrane</location>
        <topology evidence="1">Multi-pass membrane protein</topology>
    </subcellularLocation>
</comment>
<comment type="similarity">
    <text evidence="1">Belongs to the UPF0060 family.</text>
</comment>